<dbReference type="EC" id="4.6.1.12" evidence="1"/>
<dbReference type="EMBL" id="CP000886">
    <property type="protein sequence ID" value="ABX68983.1"/>
    <property type="molecule type" value="Genomic_DNA"/>
</dbReference>
<dbReference type="RefSeq" id="WP_001219244.1">
    <property type="nucleotide sequence ID" value="NC_010102.1"/>
</dbReference>
<dbReference type="SMR" id="A9N2D2"/>
<dbReference type="KEGG" id="spq:SPAB_03643"/>
<dbReference type="PATRIC" id="fig|1016998.12.peg.3430"/>
<dbReference type="HOGENOM" id="CLU_084630_2_0_6"/>
<dbReference type="BioCyc" id="SENT1016998:SPAB_RS14845-MONOMER"/>
<dbReference type="UniPathway" id="UPA00056">
    <property type="reaction ID" value="UER00095"/>
</dbReference>
<dbReference type="Proteomes" id="UP000008556">
    <property type="component" value="Chromosome"/>
</dbReference>
<dbReference type="GO" id="GO:0008685">
    <property type="term" value="F:2-C-methyl-D-erythritol 2,4-cyclodiphosphate synthase activity"/>
    <property type="evidence" value="ECO:0007669"/>
    <property type="project" value="UniProtKB-UniRule"/>
</dbReference>
<dbReference type="GO" id="GO:0046872">
    <property type="term" value="F:metal ion binding"/>
    <property type="evidence" value="ECO:0007669"/>
    <property type="project" value="UniProtKB-KW"/>
</dbReference>
<dbReference type="GO" id="GO:0019288">
    <property type="term" value="P:isopentenyl diphosphate biosynthetic process, methylerythritol 4-phosphate pathway"/>
    <property type="evidence" value="ECO:0007669"/>
    <property type="project" value="UniProtKB-UniRule"/>
</dbReference>
<dbReference type="GO" id="GO:0016114">
    <property type="term" value="P:terpenoid biosynthetic process"/>
    <property type="evidence" value="ECO:0007669"/>
    <property type="project" value="InterPro"/>
</dbReference>
<dbReference type="CDD" id="cd00554">
    <property type="entry name" value="MECDP_synthase"/>
    <property type="match status" value="1"/>
</dbReference>
<dbReference type="FunFam" id="3.30.1330.50:FF:000001">
    <property type="entry name" value="2-C-methyl-D-erythritol 2,4-cyclodiphosphate synthase"/>
    <property type="match status" value="1"/>
</dbReference>
<dbReference type="Gene3D" id="3.30.1330.50">
    <property type="entry name" value="2-C-methyl-D-erythritol 2,4-cyclodiphosphate synthase"/>
    <property type="match status" value="1"/>
</dbReference>
<dbReference type="HAMAP" id="MF_00107">
    <property type="entry name" value="IspF"/>
    <property type="match status" value="1"/>
</dbReference>
<dbReference type="InterPro" id="IPR003526">
    <property type="entry name" value="MECDP_synthase"/>
</dbReference>
<dbReference type="InterPro" id="IPR020555">
    <property type="entry name" value="MECDP_synthase_CS"/>
</dbReference>
<dbReference type="InterPro" id="IPR036571">
    <property type="entry name" value="MECDP_synthase_sf"/>
</dbReference>
<dbReference type="NCBIfam" id="TIGR00151">
    <property type="entry name" value="ispF"/>
    <property type="match status" value="1"/>
</dbReference>
<dbReference type="PANTHER" id="PTHR43181">
    <property type="entry name" value="2-C-METHYL-D-ERYTHRITOL 2,4-CYCLODIPHOSPHATE SYNTHASE, CHLOROPLASTIC"/>
    <property type="match status" value="1"/>
</dbReference>
<dbReference type="PANTHER" id="PTHR43181:SF1">
    <property type="entry name" value="2-C-METHYL-D-ERYTHRITOL 2,4-CYCLODIPHOSPHATE SYNTHASE, CHLOROPLASTIC"/>
    <property type="match status" value="1"/>
</dbReference>
<dbReference type="Pfam" id="PF02542">
    <property type="entry name" value="YgbB"/>
    <property type="match status" value="1"/>
</dbReference>
<dbReference type="SUPFAM" id="SSF69765">
    <property type="entry name" value="IpsF-like"/>
    <property type="match status" value="1"/>
</dbReference>
<dbReference type="PROSITE" id="PS01350">
    <property type="entry name" value="ISPF"/>
    <property type="match status" value="1"/>
</dbReference>
<keyword id="KW-0414">Isoprene biosynthesis</keyword>
<keyword id="KW-0456">Lyase</keyword>
<keyword id="KW-0479">Metal-binding</keyword>
<protein>
    <recommendedName>
        <fullName evidence="1">2-C-methyl-D-erythritol 2,4-cyclodiphosphate synthase</fullName>
        <shortName evidence="1">MECDP-synthase</shortName>
        <shortName evidence="1">MECPP-synthase</shortName>
        <shortName evidence="1">MECPS</shortName>
        <ecNumber evidence="1">4.6.1.12</ecNumber>
    </recommendedName>
</protein>
<evidence type="ECO:0000255" key="1">
    <source>
        <dbReference type="HAMAP-Rule" id="MF_00107"/>
    </source>
</evidence>
<organism>
    <name type="scientific">Salmonella paratyphi B (strain ATCC BAA-1250 / SPB7)</name>
    <dbReference type="NCBI Taxonomy" id="1016998"/>
    <lineage>
        <taxon>Bacteria</taxon>
        <taxon>Pseudomonadati</taxon>
        <taxon>Pseudomonadota</taxon>
        <taxon>Gammaproteobacteria</taxon>
        <taxon>Enterobacterales</taxon>
        <taxon>Enterobacteriaceae</taxon>
        <taxon>Salmonella</taxon>
    </lineage>
</organism>
<proteinExistence type="inferred from homology"/>
<reference key="1">
    <citation type="submission" date="2007-11" db="EMBL/GenBank/DDBJ databases">
        <authorList>
            <consortium name="The Salmonella enterica serovar Paratyphi B Genome Sequencing Project"/>
            <person name="McClelland M."/>
            <person name="Sanderson E.K."/>
            <person name="Porwollik S."/>
            <person name="Spieth J."/>
            <person name="Clifton W.S."/>
            <person name="Fulton R."/>
            <person name="Cordes M."/>
            <person name="Wollam A."/>
            <person name="Shah N."/>
            <person name="Pepin K."/>
            <person name="Bhonagiri V."/>
            <person name="Nash W."/>
            <person name="Johnson M."/>
            <person name="Thiruvilangam P."/>
            <person name="Wilson R."/>
        </authorList>
    </citation>
    <scope>NUCLEOTIDE SEQUENCE [LARGE SCALE GENOMIC DNA]</scope>
    <source>
        <strain>ATCC BAA-1250 / SPB7</strain>
    </source>
</reference>
<name>ISPF_SALPB</name>
<sequence>MRIGHGFDVHAFGGEGPIIIGGVRIPYEKGLLAHSDGDVALHALTDALLGAAALGDIGKLFPDTDPAFKGADSRELLREAWRRIQAKGYTLGNVDVTIIAQAPKMLPHIPQMRVFIAEDLGCHMDDVNVKATTTEKLGFTGRGEGIACEAVALLMKAAK</sequence>
<accession>A9N2D2</accession>
<comment type="function">
    <text evidence="1">Involved in the biosynthesis of isopentenyl diphosphate (IPP) and dimethylallyl diphosphate (DMAPP), two major building blocks of isoprenoid compounds. Catalyzes the conversion of 4-diphosphocytidyl-2-C-methyl-D-erythritol 2-phosphate (CDP-ME2P) to 2-C-methyl-D-erythritol 2,4-cyclodiphosphate (ME-CPP) with a corresponding release of cytidine 5-monophosphate (CMP).</text>
</comment>
<comment type="catalytic activity">
    <reaction evidence="1">
        <text>4-CDP-2-C-methyl-D-erythritol 2-phosphate = 2-C-methyl-D-erythritol 2,4-cyclic diphosphate + CMP</text>
        <dbReference type="Rhea" id="RHEA:23864"/>
        <dbReference type="ChEBI" id="CHEBI:57919"/>
        <dbReference type="ChEBI" id="CHEBI:58483"/>
        <dbReference type="ChEBI" id="CHEBI:60377"/>
        <dbReference type="EC" id="4.6.1.12"/>
    </reaction>
</comment>
<comment type="cofactor">
    <cofactor evidence="1">
        <name>a divalent metal cation</name>
        <dbReference type="ChEBI" id="CHEBI:60240"/>
    </cofactor>
    <text evidence="1">Binds 1 divalent metal cation per subunit.</text>
</comment>
<comment type="pathway">
    <text evidence="1">Isoprenoid biosynthesis; isopentenyl diphosphate biosynthesis via DXP pathway; isopentenyl diphosphate from 1-deoxy-D-xylulose 5-phosphate: step 4/6.</text>
</comment>
<comment type="subunit">
    <text evidence="1">Homotrimer.</text>
</comment>
<comment type="similarity">
    <text evidence="1">Belongs to the IspF family.</text>
</comment>
<feature type="chain" id="PRO_1000075920" description="2-C-methyl-D-erythritol 2,4-cyclodiphosphate synthase">
    <location>
        <begin position="1"/>
        <end position="159"/>
    </location>
</feature>
<feature type="binding site" evidence="1">
    <location>
        <begin position="8"/>
        <end position="10"/>
    </location>
    <ligand>
        <name>4-CDP-2-C-methyl-D-erythritol 2-phosphate</name>
        <dbReference type="ChEBI" id="CHEBI:57919"/>
    </ligand>
</feature>
<feature type="binding site" evidence="1">
    <location>
        <position position="8"/>
    </location>
    <ligand>
        <name>a divalent metal cation</name>
        <dbReference type="ChEBI" id="CHEBI:60240"/>
    </ligand>
</feature>
<feature type="binding site" evidence="1">
    <location>
        <position position="10"/>
    </location>
    <ligand>
        <name>a divalent metal cation</name>
        <dbReference type="ChEBI" id="CHEBI:60240"/>
    </ligand>
</feature>
<feature type="binding site" evidence="1">
    <location>
        <begin position="34"/>
        <end position="35"/>
    </location>
    <ligand>
        <name>4-CDP-2-C-methyl-D-erythritol 2-phosphate</name>
        <dbReference type="ChEBI" id="CHEBI:57919"/>
    </ligand>
</feature>
<feature type="binding site" evidence="1">
    <location>
        <position position="42"/>
    </location>
    <ligand>
        <name>a divalent metal cation</name>
        <dbReference type="ChEBI" id="CHEBI:60240"/>
    </ligand>
</feature>
<feature type="binding site" evidence="1">
    <location>
        <begin position="56"/>
        <end position="58"/>
    </location>
    <ligand>
        <name>4-CDP-2-C-methyl-D-erythritol 2-phosphate</name>
        <dbReference type="ChEBI" id="CHEBI:57919"/>
    </ligand>
</feature>
<feature type="binding site" evidence="1">
    <location>
        <begin position="61"/>
        <end position="65"/>
    </location>
    <ligand>
        <name>4-CDP-2-C-methyl-D-erythritol 2-phosphate</name>
        <dbReference type="ChEBI" id="CHEBI:57919"/>
    </ligand>
</feature>
<feature type="binding site" evidence="1">
    <location>
        <begin position="100"/>
        <end position="106"/>
    </location>
    <ligand>
        <name>4-CDP-2-C-methyl-D-erythritol 2-phosphate</name>
        <dbReference type="ChEBI" id="CHEBI:57919"/>
    </ligand>
</feature>
<feature type="binding site" evidence="1">
    <location>
        <begin position="132"/>
        <end position="135"/>
    </location>
    <ligand>
        <name>4-CDP-2-C-methyl-D-erythritol 2-phosphate</name>
        <dbReference type="ChEBI" id="CHEBI:57919"/>
    </ligand>
</feature>
<feature type="binding site" evidence="1">
    <location>
        <position position="139"/>
    </location>
    <ligand>
        <name>4-CDP-2-C-methyl-D-erythritol 2-phosphate</name>
        <dbReference type="ChEBI" id="CHEBI:57919"/>
    </ligand>
</feature>
<feature type="binding site" evidence="1">
    <location>
        <position position="142"/>
    </location>
    <ligand>
        <name>4-CDP-2-C-methyl-D-erythritol 2-phosphate</name>
        <dbReference type="ChEBI" id="CHEBI:57919"/>
    </ligand>
</feature>
<feature type="site" description="Transition state stabilizer" evidence="1">
    <location>
        <position position="34"/>
    </location>
</feature>
<feature type="site" description="Transition state stabilizer" evidence="1">
    <location>
        <position position="133"/>
    </location>
</feature>
<gene>
    <name evidence="1" type="primary">ispF</name>
    <name type="ordered locus">SPAB_03643</name>
</gene>